<feature type="chain" id="PRO_0000178904" description="UDP-N-acetylglucosamine 1-carboxyvinyltransferase">
    <location>
        <begin position="1"/>
        <end position="421"/>
    </location>
</feature>
<feature type="active site" description="Proton donor" evidence="1">
    <location>
        <position position="117"/>
    </location>
</feature>
<feature type="binding site" evidence="1">
    <location>
        <begin position="22"/>
        <end position="23"/>
    </location>
    <ligand>
        <name>phosphoenolpyruvate</name>
        <dbReference type="ChEBI" id="CHEBI:58702"/>
    </ligand>
</feature>
<feature type="binding site" evidence="1">
    <location>
        <position position="93"/>
    </location>
    <ligand>
        <name>UDP-N-acetyl-alpha-D-glucosamine</name>
        <dbReference type="ChEBI" id="CHEBI:57705"/>
    </ligand>
</feature>
<feature type="binding site" evidence="1">
    <location>
        <begin position="122"/>
        <end position="126"/>
    </location>
    <ligand>
        <name>UDP-N-acetyl-alpha-D-glucosamine</name>
        <dbReference type="ChEBI" id="CHEBI:57705"/>
    </ligand>
</feature>
<feature type="binding site" evidence="1">
    <location>
        <position position="308"/>
    </location>
    <ligand>
        <name>UDP-N-acetyl-alpha-D-glucosamine</name>
        <dbReference type="ChEBI" id="CHEBI:57705"/>
    </ligand>
</feature>
<feature type="binding site" evidence="1">
    <location>
        <position position="330"/>
    </location>
    <ligand>
        <name>UDP-N-acetyl-alpha-D-glucosamine</name>
        <dbReference type="ChEBI" id="CHEBI:57705"/>
    </ligand>
</feature>
<feature type="modified residue" description="2-(S-cysteinyl)pyruvic acid O-phosphothioketal" evidence="1">
    <location>
        <position position="117"/>
    </location>
</feature>
<sequence length="421" mass="44998">MDKLIITGGVRLDGEIRISGAKNSALPILAATLLADGPVTVQNLPHLHDITTMIELFGRMGIEPVIDEKLSVEIDPRTIKTLIAPYELVKTMRASILVLGPMVARFGEAEVALPGGCAIGSRPVDLHIRGLEAMGAIIDVEGGYIKAKAPEGGLRGAHFFFDTVSVTGTENIMMAASLANGRSVLENAAREPEVVDLANFLIAMGAKIHGAGTDTITIDGVKRLGSATYKVMPDRIETGTYLVAAAVTGGRVKVKDTDPTILEAVLLKLQEAGAEVTTGEDWIELNMHGKRPKAVNVRTAPYPAFPTDMQAQFISLNAIAEGTGAVIETIFENRFMHVYEMHRMGAQIQVEGNTAIVTGTEVLKGAPVMATDLRASASLVISALVAQGDTLIDRIYHIDRGYECIEEKLQMLGAKIRRVPG</sequence>
<evidence type="ECO:0000255" key="1">
    <source>
        <dbReference type="HAMAP-Rule" id="MF_00111"/>
    </source>
</evidence>
<proteinExistence type="inferred from homology"/>
<keyword id="KW-0131">Cell cycle</keyword>
<keyword id="KW-0132">Cell division</keyword>
<keyword id="KW-0133">Cell shape</keyword>
<keyword id="KW-0961">Cell wall biogenesis/degradation</keyword>
<keyword id="KW-0963">Cytoplasm</keyword>
<keyword id="KW-0573">Peptidoglycan synthesis</keyword>
<keyword id="KW-0670">Pyruvate</keyword>
<keyword id="KW-1185">Reference proteome</keyword>
<keyword id="KW-0808">Transferase</keyword>
<organism>
    <name type="scientific">Pseudomonas syringae pv. tomato (strain ATCC BAA-871 / DC3000)</name>
    <dbReference type="NCBI Taxonomy" id="223283"/>
    <lineage>
        <taxon>Bacteria</taxon>
        <taxon>Pseudomonadati</taxon>
        <taxon>Pseudomonadota</taxon>
        <taxon>Gammaproteobacteria</taxon>
        <taxon>Pseudomonadales</taxon>
        <taxon>Pseudomonadaceae</taxon>
        <taxon>Pseudomonas</taxon>
    </lineage>
</organism>
<accession>Q87WV2</accession>
<dbReference type="EC" id="2.5.1.7" evidence="1"/>
<dbReference type="EMBL" id="AE016853">
    <property type="protein sequence ID" value="AAO57890.1"/>
    <property type="molecule type" value="Genomic_DNA"/>
</dbReference>
<dbReference type="RefSeq" id="NP_794195.1">
    <property type="nucleotide sequence ID" value="NC_004578.1"/>
</dbReference>
<dbReference type="RefSeq" id="WP_005739059.1">
    <property type="nucleotide sequence ID" value="NC_004578.1"/>
</dbReference>
<dbReference type="SMR" id="Q87WV2"/>
<dbReference type="STRING" id="223283.PSPTO_4441"/>
<dbReference type="GeneID" id="61788148"/>
<dbReference type="KEGG" id="pst:PSPTO_4441"/>
<dbReference type="PATRIC" id="fig|223283.9.peg.4556"/>
<dbReference type="eggNOG" id="COG0766">
    <property type="taxonomic scope" value="Bacteria"/>
</dbReference>
<dbReference type="HOGENOM" id="CLU_027387_0_0_6"/>
<dbReference type="OrthoDB" id="9803760at2"/>
<dbReference type="PhylomeDB" id="Q87WV2"/>
<dbReference type="UniPathway" id="UPA00219"/>
<dbReference type="Proteomes" id="UP000002515">
    <property type="component" value="Chromosome"/>
</dbReference>
<dbReference type="GO" id="GO:0005737">
    <property type="term" value="C:cytoplasm"/>
    <property type="evidence" value="ECO:0007669"/>
    <property type="project" value="UniProtKB-SubCell"/>
</dbReference>
<dbReference type="GO" id="GO:0008760">
    <property type="term" value="F:UDP-N-acetylglucosamine 1-carboxyvinyltransferase activity"/>
    <property type="evidence" value="ECO:0007669"/>
    <property type="project" value="UniProtKB-UniRule"/>
</dbReference>
<dbReference type="GO" id="GO:0051301">
    <property type="term" value="P:cell division"/>
    <property type="evidence" value="ECO:0007669"/>
    <property type="project" value="UniProtKB-KW"/>
</dbReference>
<dbReference type="GO" id="GO:0071555">
    <property type="term" value="P:cell wall organization"/>
    <property type="evidence" value="ECO:0007669"/>
    <property type="project" value="UniProtKB-KW"/>
</dbReference>
<dbReference type="GO" id="GO:0009252">
    <property type="term" value="P:peptidoglycan biosynthetic process"/>
    <property type="evidence" value="ECO:0007669"/>
    <property type="project" value="UniProtKB-UniRule"/>
</dbReference>
<dbReference type="GO" id="GO:0008360">
    <property type="term" value="P:regulation of cell shape"/>
    <property type="evidence" value="ECO:0007669"/>
    <property type="project" value="UniProtKB-KW"/>
</dbReference>
<dbReference type="GO" id="GO:0019277">
    <property type="term" value="P:UDP-N-acetylgalactosamine biosynthetic process"/>
    <property type="evidence" value="ECO:0007669"/>
    <property type="project" value="InterPro"/>
</dbReference>
<dbReference type="CDD" id="cd01555">
    <property type="entry name" value="UdpNAET"/>
    <property type="match status" value="1"/>
</dbReference>
<dbReference type="FunFam" id="3.65.10.10:FF:000002">
    <property type="entry name" value="UDP-N-acetylglucosamine 1-carboxyvinyltransferase"/>
    <property type="match status" value="1"/>
</dbReference>
<dbReference type="Gene3D" id="3.65.10.10">
    <property type="entry name" value="Enolpyruvate transferase domain"/>
    <property type="match status" value="2"/>
</dbReference>
<dbReference type="HAMAP" id="MF_00111">
    <property type="entry name" value="MurA"/>
    <property type="match status" value="1"/>
</dbReference>
<dbReference type="InterPro" id="IPR001986">
    <property type="entry name" value="Enolpyruvate_Tfrase_dom"/>
</dbReference>
<dbReference type="InterPro" id="IPR036968">
    <property type="entry name" value="Enolpyruvate_Tfrase_sf"/>
</dbReference>
<dbReference type="InterPro" id="IPR050068">
    <property type="entry name" value="MurA_subfamily"/>
</dbReference>
<dbReference type="InterPro" id="IPR013792">
    <property type="entry name" value="RNA3'P_cycl/enolpyr_Trfase_a/b"/>
</dbReference>
<dbReference type="InterPro" id="IPR005750">
    <property type="entry name" value="UDP_GlcNAc_COvinyl_MurA"/>
</dbReference>
<dbReference type="NCBIfam" id="TIGR01072">
    <property type="entry name" value="murA"/>
    <property type="match status" value="1"/>
</dbReference>
<dbReference type="NCBIfam" id="NF006873">
    <property type="entry name" value="PRK09369.1"/>
    <property type="match status" value="1"/>
</dbReference>
<dbReference type="PANTHER" id="PTHR43783">
    <property type="entry name" value="UDP-N-ACETYLGLUCOSAMINE 1-CARBOXYVINYLTRANSFERASE"/>
    <property type="match status" value="1"/>
</dbReference>
<dbReference type="PANTHER" id="PTHR43783:SF1">
    <property type="entry name" value="UDP-N-ACETYLGLUCOSAMINE 1-CARBOXYVINYLTRANSFERASE"/>
    <property type="match status" value="1"/>
</dbReference>
<dbReference type="Pfam" id="PF00275">
    <property type="entry name" value="EPSP_synthase"/>
    <property type="match status" value="1"/>
</dbReference>
<dbReference type="SUPFAM" id="SSF55205">
    <property type="entry name" value="EPT/RTPC-like"/>
    <property type="match status" value="1"/>
</dbReference>
<protein>
    <recommendedName>
        <fullName evidence="1">UDP-N-acetylglucosamine 1-carboxyvinyltransferase</fullName>
        <ecNumber evidence="1">2.5.1.7</ecNumber>
    </recommendedName>
    <alternativeName>
        <fullName evidence="1">Enoylpyruvate transferase</fullName>
    </alternativeName>
    <alternativeName>
        <fullName evidence="1">UDP-N-acetylglucosamine enolpyruvyl transferase</fullName>
        <shortName evidence="1">EPT</shortName>
    </alternativeName>
</protein>
<reference key="1">
    <citation type="journal article" date="2003" name="Proc. Natl. Acad. Sci. U.S.A.">
        <title>The complete genome sequence of the Arabidopsis and tomato pathogen Pseudomonas syringae pv. tomato DC3000.</title>
        <authorList>
            <person name="Buell C.R."/>
            <person name="Joardar V."/>
            <person name="Lindeberg M."/>
            <person name="Selengut J."/>
            <person name="Paulsen I.T."/>
            <person name="Gwinn M.L."/>
            <person name="Dodson R.J."/>
            <person name="DeBoy R.T."/>
            <person name="Durkin A.S."/>
            <person name="Kolonay J.F."/>
            <person name="Madupu R."/>
            <person name="Daugherty S.C."/>
            <person name="Brinkac L.M."/>
            <person name="Beanan M.J."/>
            <person name="Haft D.H."/>
            <person name="Nelson W.C."/>
            <person name="Davidsen T.M."/>
            <person name="Zafar N."/>
            <person name="Zhou L."/>
            <person name="Liu J."/>
            <person name="Yuan Q."/>
            <person name="Khouri H.M."/>
            <person name="Fedorova N.B."/>
            <person name="Tran B."/>
            <person name="Russell D."/>
            <person name="Berry K.J."/>
            <person name="Utterback T.R."/>
            <person name="Van Aken S.E."/>
            <person name="Feldblyum T.V."/>
            <person name="D'Ascenzo M."/>
            <person name="Deng W.-L."/>
            <person name="Ramos A.R."/>
            <person name="Alfano J.R."/>
            <person name="Cartinhour S."/>
            <person name="Chatterjee A.K."/>
            <person name="Delaney T.P."/>
            <person name="Lazarowitz S.G."/>
            <person name="Martin G.B."/>
            <person name="Schneider D.J."/>
            <person name="Tang X."/>
            <person name="Bender C.L."/>
            <person name="White O."/>
            <person name="Fraser C.M."/>
            <person name="Collmer A."/>
        </authorList>
    </citation>
    <scope>NUCLEOTIDE SEQUENCE [LARGE SCALE GENOMIC DNA]</scope>
    <source>
        <strain>ATCC BAA-871 / DC3000</strain>
    </source>
</reference>
<gene>
    <name evidence="1" type="primary">murA</name>
    <name type="ordered locus">PSPTO_4441</name>
</gene>
<comment type="function">
    <text evidence="1">Cell wall formation. Adds enolpyruvyl to UDP-N-acetylglucosamine.</text>
</comment>
<comment type="catalytic activity">
    <reaction evidence="1">
        <text>phosphoenolpyruvate + UDP-N-acetyl-alpha-D-glucosamine = UDP-N-acetyl-3-O-(1-carboxyvinyl)-alpha-D-glucosamine + phosphate</text>
        <dbReference type="Rhea" id="RHEA:18681"/>
        <dbReference type="ChEBI" id="CHEBI:43474"/>
        <dbReference type="ChEBI" id="CHEBI:57705"/>
        <dbReference type="ChEBI" id="CHEBI:58702"/>
        <dbReference type="ChEBI" id="CHEBI:68483"/>
        <dbReference type="EC" id="2.5.1.7"/>
    </reaction>
</comment>
<comment type="pathway">
    <text evidence="1">Cell wall biogenesis; peptidoglycan biosynthesis.</text>
</comment>
<comment type="subcellular location">
    <subcellularLocation>
        <location evidence="1">Cytoplasm</location>
    </subcellularLocation>
</comment>
<comment type="similarity">
    <text evidence="1">Belongs to the EPSP synthase family. MurA subfamily.</text>
</comment>
<name>MURA_PSESM</name>